<keyword id="KW-0050">Antiport</keyword>
<keyword id="KW-0106">Calcium</keyword>
<keyword id="KW-0109">Calcium transport</keyword>
<keyword id="KW-0175">Coiled coil</keyword>
<keyword id="KW-0406">Ion transport</keyword>
<keyword id="KW-0472">Membrane</keyword>
<keyword id="KW-0479">Metal-binding</keyword>
<keyword id="KW-0496">Mitochondrion</keyword>
<keyword id="KW-0999">Mitochondrion inner membrane</keyword>
<keyword id="KW-1185">Reference proteome</keyword>
<keyword id="KW-0677">Repeat</keyword>
<keyword id="KW-0809">Transit peptide</keyword>
<keyword id="KW-0812">Transmembrane</keyword>
<keyword id="KW-1133">Transmembrane helix</keyword>
<keyword id="KW-0813">Transport</keyword>
<dbReference type="EMBL" id="AE013599">
    <property type="protein sequence ID" value="AAM68316.1"/>
    <property type="molecule type" value="Genomic_DNA"/>
</dbReference>
<dbReference type="EMBL" id="AE013599">
    <property type="protein sequence ID" value="AAM68317.1"/>
    <property type="molecule type" value="Genomic_DNA"/>
</dbReference>
<dbReference type="EMBL" id="AY047527">
    <property type="protein sequence ID" value="AAK77259.1"/>
    <property type="molecule type" value="mRNA"/>
</dbReference>
<dbReference type="EMBL" id="Y10912">
    <property type="protein sequence ID" value="CAA71853.1"/>
    <property type="status" value="ALT_FRAME"/>
    <property type="molecule type" value="mRNA"/>
</dbReference>
<dbReference type="RefSeq" id="NP_611922.1">
    <property type="nucleotide sequence ID" value="NM_138078.3"/>
</dbReference>
<dbReference type="RefSeq" id="NP_726453.1">
    <property type="nucleotide sequence ID" value="NM_166674.2"/>
</dbReference>
<dbReference type="RefSeq" id="NP_726454.1">
    <property type="nucleotide sequence ID" value="NM_166675.2"/>
</dbReference>
<dbReference type="SMR" id="P91927"/>
<dbReference type="BioGRID" id="63485">
    <property type="interactions" value="6"/>
</dbReference>
<dbReference type="DIP" id="DIP-23753N"/>
<dbReference type="FunCoup" id="P91927">
    <property type="interactions" value="1865"/>
</dbReference>
<dbReference type="IntAct" id="P91927">
    <property type="interactions" value="7"/>
</dbReference>
<dbReference type="STRING" id="7227.FBpp0072255"/>
<dbReference type="TCDB" id="2.A.97.1.3">
    <property type="family name" value="the mitochondrial inner membrane k(+)/h(+) and ca(2+)/h(+) exchanger (letm1) family"/>
</dbReference>
<dbReference type="PaxDb" id="7227-FBpp0072255"/>
<dbReference type="EnsemblMetazoa" id="FBtr0072347">
    <property type="protein sequence ID" value="FBpp0072254"/>
    <property type="gene ID" value="FBgn0284252"/>
</dbReference>
<dbReference type="EnsemblMetazoa" id="FBtr0072348">
    <property type="protein sequence ID" value="FBpp0072255"/>
    <property type="gene ID" value="FBgn0284252"/>
</dbReference>
<dbReference type="EnsemblMetazoa" id="FBtr0072349">
    <property type="protein sequence ID" value="FBpp0072256"/>
    <property type="gene ID" value="FBgn0284252"/>
</dbReference>
<dbReference type="GeneID" id="37912"/>
<dbReference type="KEGG" id="dme:Dmel_CG4589"/>
<dbReference type="UCSC" id="CG4589-RA">
    <property type="organism name" value="d. melanogaster"/>
</dbReference>
<dbReference type="AGR" id="FB:FBgn0284252"/>
<dbReference type="CTD" id="3954"/>
<dbReference type="FlyBase" id="FBgn0284252">
    <property type="gene designation" value="Letm1"/>
</dbReference>
<dbReference type="VEuPathDB" id="VectorBase:FBgn0284252"/>
<dbReference type="eggNOG" id="KOG1043">
    <property type="taxonomic scope" value="Eukaryota"/>
</dbReference>
<dbReference type="GeneTree" id="ENSGT00950000183167"/>
<dbReference type="HOGENOM" id="CLU_008958_1_0_1"/>
<dbReference type="InParanoid" id="P91927"/>
<dbReference type="OMA" id="HGFRHLH"/>
<dbReference type="OrthoDB" id="624114at2759"/>
<dbReference type="PhylomeDB" id="P91927"/>
<dbReference type="SignaLink" id="P91927"/>
<dbReference type="GenomeRNAi" id="37912"/>
<dbReference type="PRO" id="PR:P91927"/>
<dbReference type="Proteomes" id="UP000000803">
    <property type="component" value="Chromosome 2R"/>
</dbReference>
<dbReference type="Bgee" id="FBgn0284252">
    <property type="expression patterns" value="Expressed in adult hindgut (Drosophila) and 209 other cell types or tissues"/>
</dbReference>
<dbReference type="GO" id="GO:0005743">
    <property type="term" value="C:mitochondrial inner membrane"/>
    <property type="evidence" value="ECO:0007669"/>
    <property type="project" value="UniProtKB-SubCell"/>
</dbReference>
<dbReference type="GO" id="GO:0031966">
    <property type="term" value="C:mitochondrial membrane"/>
    <property type="evidence" value="ECO:0000314"/>
    <property type="project" value="FlyBase"/>
</dbReference>
<dbReference type="GO" id="GO:0005739">
    <property type="term" value="C:mitochondrion"/>
    <property type="evidence" value="ECO:0000314"/>
    <property type="project" value="FlyBase"/>
</dbReference>
<dbReference type="GO" id="GO:0098793">
    <property type="term" value="C:presynapse"/>
    <property type="evidence" value="ECO:0007669"/>
    <property type="project" value="GOC"/>
</dbReference>
<dbReference type="GO" id="GO:0005509">
    <property type="term" value="F:calcium ion binding"/>
    <property type="evidence" value="ECO:0007669"/>
    <property type="project" value="InterPro"/>
</dbReference>
<dbReference type="GO" id="GO:0005432">
    <property type="term" value="F:calcium:sodium antiporter activity"/>
    <property type="evidence" value="ECO:0000314"/>
    <property type="project" value="FlyBase"/>
</dbReference>
<dbReference type="GO" id="GO:0015386">
    <property type="term" value="F:potassium:proton antiporter activity"/>
    <property type="evidence" value="ECO:0000315"/>
    <property type="project" value="FlyBase"/>
</dbReference>
<dbReference type="GO" id="GO:0043022">
    <property type="term" value="F:ribosome binding"/>
    <property type="evidence" value="ECO:0007669"/>
    <property type="project" value="InterPro"/>
</dbReference>
<dbReference type="GO" id="GO:0022857">
    <property type="term" value="F:transmembrane transporter activity"/>
    <property type="evidence" value="ECO:0000318"/>
    <property type="project" value="GO_Central"/>
</dbReference>
<dbReference type="GO" id="GO:0071456">
    <property type="term" value="P:cellular response to hypoxia"/>
    <property type="evidence" value="ECO:0000315"/>
    <property type="project" value="FlyBase"/>
</dbReference>
<dbReference type="GO" id="GO:0006851">
    <property type="term" value="P:mitochondrial calcium ion transmembrane transport"/>
    <property type="evidence" value="ECO:0000315"/>
    <property type="project" value="FlyBase"/>
</dbReference>
<dbReference type="GO" id="GO:0007005">
    <property type="term" value="P:mitochondrion organization"/>
    <property type="evidence" value="ECO:0000315"/>
    <property type="project" value="FlyBase"/>
</dbReference>
<dbReference type="GO" id="GO:0007269">
    <property type="term" value="P:neurotransmitter secretion"/>
    <property type="evidence" value="ECO:0000315"/>
    <property type="project" value="FlyBase"/>
</dbReference>
<dbReference type="GO" id="GO:0071805">
    <property type="term" value="P:potassium ion transmembrane transport"/>
    <property type="evidence" value="ECO:0000315"/>
    <property type="project" value="FlyBase"/>
</dbReference>
<dbReference type="GO" id="GO:1902600">
    <property type="term" value="P:proton transmembrane transport"/>
    <property type="evidence" value="ECO:0000315"/>
    <property type="project" value="FlyBase"/>
</dbReference>
<dbReference type="Gene3D" id="1.10.238.10">
    <property type="entry name" value="EF-hand"/>
    <property type="match status" value="1"/>
</dbReference>
<dbReference type="InterPro" id="IPR011992">
    <property type="entry name" value="EF-hand-dom_pair"/>
</dbReference>
<dbReference type="InterPro" id="IPR018247">
    <property type="entry name" value="EF_Hand_1_Ca_BS"/>
</dbReference>
<dbReference type="InterPro" id="IPR002048">
    <property type="entry name" value="EF_hand_dom"/>
</dbReference>
<dbReference type="InterPro" id="IPR033122">
    <property type="entry name" value="LETM1-like_RBD"/>
</dbReference>
<dbReference type="InterPro" id="IPR044202">
    <property type="entry name" value="LETM1/MDM38-like"/>
</dbReference>
<dbReference type="PANTHER" id="PTHR14009">
    <property type="entry name" value="LEUCINE ZIPPER-EF-HAND CONTAINING TRANSMEMBRANE PROTEIN"/>
    <property type="match status" value="1"/>
</dbReference>
<dbReference type="PANTHER" id="PTHR14009:SF1">
    <property type="entry name" value="MITOCHONDRIAL PROTON_CALCIUM EXCHANGER PROTEIN"/>
    <property type="match status" value="1"/>
</dbReference>
<dbReference type="Pfam" id="PF13202">
    <property type="entry name" value="EF-hand_5"/>
    <property type="match status" value="2"/>
</dbReference>
<dbReference type="Pfam" id="PF07766">
    <property type="entry name" value="LETM1_RBD"/>
    <property type="match status" value="1"/>
</dbReference>
<dbReference type="SMART" id="SM00054">
    <property type="entry name" value="EFh"/>
    <property type="match status" value="2"/>
</dbReference>
<dbReference type="SUPFAM" id="SSF47473">
    <property type="entry name" value="EF-hand"/>
    <property type="match status" value="1"/>
</dbReference>
<dbReference type="PROSITE" id="PS00018">
    <property type="entry name" value="EF_HAND_1"/>
    <property type="match status" value="2"/>
</dbReference>
<dbReference type="PROSITE" id="PS50222">
    <property type="entry name" value="EF_HAND_2"/>
    <property type="match status" value="2"/>
</dbReference>
<dbReference type="PROSITE" id="PS51758">
    <property type="entry name" value="LETM1_RBD"/>
    <property type="match status" value="1"/>
</dbReference>
<feature type="transit peptide" description="Mitochondrion" evidence="2">
    <location>
        <begin position="1"/>
        <end position="60"/>
    </location>
</feature>
<feature type="chain" id="PRO_0000073861" description="Mitochondrial proton/calcium exchanger protein">
    <location>
        <begin position="61"/>
        <end position="1013"/>
    </location>
</feature>
<feature type="transmembrane region" description="Helical" evidence="2">
    <location>
        <begin position="237"/>
        <end position="257"/>
    </location>
</feature>
<feature type="domain" description="Letm1 RBD" evidence="4">
    <location>
        <begin position="280"/>
        <end position="554"/>
    </location>
</feature>
<feature type="domain" description="EF-hand 1" evidence="3">
    <location>
        <begin position="687"/>
        <end position="722"/>
    </location>
</feature>
<feature type="domain" description="EF-hand 2" evidence="3">
    <location>
        <begin position="770"/>
        <end position="805"/>
    </location>
</feature>
<feature type="region of interest" description="Disordered" evidence="5">
    <location>
        <begin position="877"/>
        <end position="1004"/>
    </location>
</feature>
<feature type="coiled-coil region" evidence="2">
    <location>
        <begin position="104"/>
        <end position="131"/>
    </location>
</feature>
<feature type="coiled-coil region" evidence="2">
    <location>
        <begin position="488"/>
        <end position="525"/>
    </location>
</feature>
<feature type="coiled-coil region" evidence="2">
    <location>
        <begin position="573"/>
        <end position="653"/>
    </location>
</feature>
<feature type="coiled-coil region" evidence="2">
    <location>
        <begin position="823"/>
        <end position="919"/>
    </location>
</feature>
<feature type="compositionally biased region" description="Basic and acidic residues" evidence="5">
    <location>
        <begin position="877"/>
        <end position="926"/>
    </location>
</feature>
<feature type="compositionally biased region" description="Gly residues" evidence="5">
    <location>
        <begin position="935"/>
        <end position="945"/>
    </location>
</feature>
<feature type="compositionally biased region" description="Low complexity" evidence="5">
    <location>
        <begin position="946"/>
        <end position="959"/>
    </location>
</feature>
<feature type="compositionally biased region" description="Basic and acidic residues" evidence="5">
    <location>
        <begin position="960"/>
        <end position="970"/>
    </location>
</feature>
<feature type="compositionally biased region" description="Low complexity" evidence="5">
    <location>
        <begin position="981"/>
        <end position="1004"/>
    </location>
</feature>
<feature type="binding site" evidence="3">
    <location>
        <position position="700"/>
    </location>
    <ligand>
        <name>Ca(2+)</name>
        <dbReference type="ChEBI" id="CHEBI:29108"/>
        <label>1</label>
    </ligand>
</feature>
<feature type="binding site" evidence="3">
    <location>
        <position position="702"/>
    </location>
    <ligand>
        <name>Ca(2+)</name>
        <dbReference type="ChEBI" id="CHEBI:29108"/>
        <label>1</label>
    </ligand>
</feature>
<feature type="binding site" evidence="3">
    <location>
        <position position="704"/>
    </location>
    <ligand>
        <name>Ca(2+)</name>
        <dbReference type="ChEBI" id="CHEBI:29108"/>
        <label>1</label>
    </ligand>
</feature>
<feature type="binding site" evidence="3">
    <location>
        <position position="711"/>
    </location>
    <ligand>
        <name>Ca(2+)</name>
        <dbReference type="ChEBI" id="CHEBI:29108"/>
        <label>1</label>
    </ligand>
</feature>
<feature type="binding site" evidence="3">
    <location>
        <position position="783"/>
    </location>
    <ligand>
        <name>Ca(2+)</name>
        <dbReference type="ChEBI" id="CHEBI:29108"/>
        <label>2</label>
    </ligand>
</feature>
<feature type="binding site" evidence="3">
    <location>
        <position position="785"/>
    </location>
    <ligand>
        <name>Ca(2+)</name>
        <dbReference type="ChEBI" id="CHEBI:29108"/>
        <label>2</label>
    </ligand>
</feature>
<feature type="binding site" evidence="3">
    <location>
        <position position="787"/>
    </location>
    <ligand>
        <name>Ca(2+)</name>
        <dbReference type="ChEBI" id="CHEBI:29108"/>
        <label>2</label>
    </ligand>
</feature>
<feature type="binding site" evidence="3">
    <location>
        <position position="794"/>
    </location>
    <ligand>
        <name>Ca(2+)</name>
        <dbReference type="ChEBI" id="CHEBI:29108"/>
        <label>2</label>
    </ligand>
</feature>
<feature type="sequence conflict" description="In Ref. 4; CAA71853." evidence="7" ref="4">
    <original>E</original>
    <variation>Q</variation>
    <location>
        <position position="687"/>
    </location>
</feature>
<feature type="sequence conflict" description="In Ref. 4; CAA71853." evidence="7" ref="4">
    <original>K</original>
    <variation>G</variation>
    <location>
        <position position="690"/>
    </location>
</feature>
<feature type="sequence conflict" description="In Ref. 4; CAA71853." evidence="7" ref="4">
    <original>Q</original>
    <variation>H</variation>
    <location>
        <position position="717"/>
    </location>
</feature>
<feature type="sequence conflict" description="In Ref. 4; CAA71853." evidence="7" ref="4">
    <original>E</original>
    <variation>D</variation>
    <location>
        <position position="736"/>
    </location>
</feature>
<feature type="sequence conflict" description="In Ref. 4; CAA71853." evidence="7" ref="4">
    <original>K</original>
    <variation>R</variation>
    <location>
        <position position="740"/>
    </location>
</feature>
<feature type="sequence conflict" description="In Ref. 4; CAA71853." evidence="7" ref="4">
    <original>K</original>
    <variation>E</variation>
    <location>
        <position position="761"/>
    </location>
</feature>
<feature type="sequence conflict" description="In Ref. 4; CAA71853." evidence="7" ref="4">
    <original>G</original>
    <variation>S</variation>
    <location>
        <position position="943"/>
    </location>
</feature>
<proteinExistence type="evidence at transcript level"/>
<name>LETM1_DROME</name>
<protein>
    <recommendedName>
        <fullName evidence="7">Mitochondrial proton/calcium exchanger protein</fullName>
    </recommendedName>
    <alternativeName>
        <fullName>Leucine zipper-EF-hand-containing transmembrane protein 1</fullName>
        <shortName evidence="6">dLetm1</shortName>
    </alternativeName>
</protein>
<comment type="function">
    <text evidence="8">Mitochondrial proton/calcium antiporter that mediates proton-dependent calcium efflux from mitochondrion.</text>
</comment>
<comment type="subcellular location">
    <subcellularLocation>
        <location evidence="1">Mitochondrion inner membrane</location>
        <topology evidence="2">Single-pass membrane protein</topology>
    </subcellularLocation>
</comment>
<comment type="similarity">
    <text evidence="7">Belongs to the LETM1 family.</text>
</comment>
<comment type="sequence caution" evidence="7">
    <conflict type="frameshift">
        <sequence resource="EMBL-CDS" id="CAA71853"/>
    </conflict>
</comment>
<gene>
    <name type="primary">Letm1</name>
    <name type="synonym">anon-60Da</name>
    <name type="ORF">CG4589</name>
</gene>
<reference key="1">
    <citation type="journal article" date="2000" name="Science">
        <title>The genome sequence of Drosophila melanogaster.</title>
        <authorList>
            <person name="Adams M.D."/>
            <person name="Celniker S.E."/>
            <person name="Holt R.A."/>
            <person name="Evans C.A."/>
            <person name="Gocayne J.D."/>
            <person name="Amanatides P.G."/>
            <person name="Scherer S.E."/>
            <person name="Li P.W."/>
            <person name="Hoskins R.A."/>
            <person name="Galle R.F."/>
            <person name="George R.A."/>
            <person name="Lewis S.E."/>
            <person name="Richards S."/>
            <person name="Ashburner M."/>
            <person name="Henderson S.N."/>
            <person name="Sutton G.G."/>
            <person name="Wortman J.R."/>
            <person name="Yandell M.D."/>
            <person name="Zhang Q."/>
            <person name="Chen L.X."/>
            <person name="Brandon R.C."/>
            <person name="Rogers Y.-H.C."/>
            <person name="Blazej R.G."/>
            <person name="Champe M."/>
            <person name="Pfeiffer B.D."/>
            <person name="Wan K.H."/>
            <person name="Doyle C."/>
            <person name="Baxter E.G."/>
            <person name="Helt G."/>
            <person name="Nelson C.R."/>
            <person name="Miklos G.L.G."/>
            <person name="Abril J.F."/>
            <person name="Agbayani A."/>
            <person name="An H.-J."/>
            <person name="Andrews-Pfannkoch C."/>
            <person name="Baldwin D."/>
            <person name="Ballew R.M."/>
            <person name="Basu A."/>
            <person name="Baxendale J."/>
            <person name="Bayraktaroglu L."/>
            <person name="Beasley E.M."/>
            <person name="Beeson K.Y."/>
            <person name="Benos P.V."/>
            <person name="Berman B.P."/>
            <person name="Bhandari D."/>
            <person name="Bolshakov S."/>
            <person name="Borkova D."/>
            <person name="Botchan M.R."/>
            <person name="Bouck J."/>
            <person name="Brokstein P."/>
            <person name="Brottier P."/>
            <person name="Burtis K.C."/>
            <person name="Busam D.A."/>
            <person name="Butler H."/>
            <person name="Cadieu E."/>
            <person name="Center A."/>
            <person name="Chandra I."/>
            <person name="Cherry J.M."/>
            <person name="Cawley S."/>
            <person name="Dahlke C."/>
            <person name="Davenport L.B."/>
            <person name="Davies P."/>
            <person name="de Pablos B."/>
            <person name="Delcher A."/>
            <person name="Deng Z."/>
            <person name="Mays A.D."/>
            <person name="Dew I."/>
            <person name="Dietz S.M."/>
            <person name="Dodson K."/>
            <person name="Doup L.E."/>
            <person name="Downes M."/>
            <person name="Dugan-Rocha S."/>
            <person name="Dunkov B.C."/>
            <person name="Dunn P."/>
            <person name="Durbin K.J."/>
            <person name="Evangelista C.C."/>
            <person name="Ferraz C."/>
            <person name="Ferriera S."/>
            <person name="Fleischmann W."/>
            <person name="Fosler C."/>
            <person name="Gabrielian A.E."/>
            <person name="Garg N.S."/>
            <person name="Gelbart W.M."/>
            <person name="Glasser K."/>
            <person name="Glodek A."/>
            <person name="Gong F."/>
            <person name="Gorrell J.H."/>
            <person name="Gu Z."/>
            <person name="Guan P."/>
            <person name="Harris M."/>
            <person name="Harris N.L."/>
            <person name="Harvey D.A."/>
            <person name="Heiman T.J."/>
            <person name="Hernandez J.R."/>
            <person name="Houck J."/>
            <person name="Hostin D."/>
            <person name="Houston K.A."/>
            <person name="Howland T.J."/>
            <person name="Wei M.-H."/>
            <person name="Ibegwam C."/>
            <person name="Jalali M."/>
            <person name="Kalush F."/>
            <person name="Karpen G.H."/>
            <person name="Ke Z."/>
            <person name="Kennison J.A."/>
            <person name="Ketchum K.A."/>
            <person name="Kimmel B.E."/>
            <person name="Kodira C.D."/>
            <person name="Kraft C.L."/>
            <person name="Kravitz S."/>
            <person name="Kulp D."/>
            <person name="Lai Z."/>
            <person name="Lasko P."/>
            <person name="Lei Y."/>
            <person name="Levitsky A.A."/>
            <person name="Li J.H."/>
            <person name="Li Z."/>
            <person name="Liang Y."/>
            <person name="Lin X."/>
            <person name="Liu X."/>
            <person name="Mattei B."/>
            <person name="McIntosh T.C."/>
            <person name="McLeod M.P."/>
            <person name="McPherson D."/>
            <person name="Merkulov G."/>
            <person name="Milshina N.V."/>
            <person name="Mobarry C."/>
            <person name="Morris J."/>
            <person name="Moshrefi A."/>
            <person name="Mount S.M."/>
            <person name="Moy M."/>
            <person name="Murphy B."/>
            <person name="Murphy L."/>
            <person name="Muzny D.M."/>
            <person name="Nelson D.L."/>
            <person name="Nelson D.R."/>
            <person name="Nelson K.A."/>
            <person name="Nixon K."/>
            <person name="Nusskern D.R."/>
            <person name="Pacleb J.M."/>
            <person name="Palazzolo M."/>
            <person name="Pittman G.S."/>
            <person name="Pan S."/>
            <person name="Pollard J."/>
            <person name="Puri V."/>
            <person name="Reese M.G."/>
            <person name="Reinert K."/>
            <person name="Remington K."/>
            <person name="Saunders R.D.C."/>
            <person name="Scheeler F."/>
            <person name="Shen H."/>
            <person name="Shue B.C."/>
            <person name="Siden-Kiamos I."/>
            <person name="Simpson M."/>
            <person name="Skupski M.P."/>
            <person name="Smith T.J."/>
            <person name="Spier E."/>
            <person name="Spradling A.C."/>
            <person name="Stapleton M."/>
            <person name="Strong R."/>
            <person name="Sun E."/>
            <person name="Svirskas R."/>
            <person name="Tector C."/>
            <person name="Turner R."/>
            <person name="Venter E."/>
            <person name="Wang A.H."/>
            <person name="Wang X."/>
            <person name="Wang Z.-Y."/>
            <person name="Wassarman D.A."/>
            <person name="Weinstock G.M."/>
            <person name="Weissenbach J."/>
            <person name="Williams S.M."/>
            <person name="Woodage T."/>
            <person name="Worley K.C."/>
            <person name="Wu D."/>
            <person name="Yang S."/>
            <person name="Yao Q.A."/>
            <person name="Ye J."/>
            <person name="Yeh R.-F."/>
            <person name="Zaveri J.S."/>
            <person name="Zhan M."/>
            <person name="Zhang G."/>
            <person name="Zhao Q."/>
            <person name="Zheng L."/>
            <person name="Zheng X.H."/>
            <person name="Zhong F.N."/>
            <person name="Zhong W."/>
            <person name="Zhou X."/>
            <person name="Zhu S.C."/>
            <person name="Zhu X."/>
            <person name="Smith H.O."/>
            <person name="Gibbs R.A."/>
            <person name="Myers E.W."/>
            <person name="Rubin G.M."/>
            <person name="Venter J.C."/>
        </authorList>
    </citation>
    <scope>NUCLEOTIDE SEQUENCE [LARGE SCALE GENOMIC DNA]</scope>
    <source>
        <strain>Berkeley</strain>
    </source>
</reference>
<reference key="2">
    <citation type="journal article" date="2002" name="Genome Biol.">
        <title>Annotation of the Drosophila melanogaster euchromatic genome: a systematic review.</title>
        <authorList>
            <person name="Misra S."/>
            <person name="Crosby M.A."/>
            <person name="Mungall C.J."/>
            <person name="Matthews B.B."/>
            <person name="Campbell K.S."/>
            <person name="Hradecky P."/>
            <person name="Huang Y."/>
            <person name="Kaminker J.S."/>
            <person name="Millburn G.H."/>
            <person name="Prochnik S.E."/>
            <person name="Smith C.D."/>
            <person name="Tupy J.L."/>
            <person name="Whitfield E.J."/>
            <person name="Bayraktaroglu L."/>
            <person name="Berman B.P."/>
            <person name="Bettencourt B.R."/>
            <person name="Celniker S.E."/>
            <person name="de Grey A.D.N.J."/>
            <person name="Drysdale R.A."/>
            <person name="Harris N.L."/>
            <person name="Richter J."/>
            <person name="Russo S."/>
            <person name="Schroeder A.J."/>
            <person name="Shu S.Q."/>
            <person name="Stapleton M."/>
            <person name="Yamada C."/>
            <person name="Ashburner M."/>
            <person name="Gelbart W.M."/>
            <person name="Rubin G.M."/>
            <person name="Lewis S.E."/>
        </authorList>
    </citation>
    <scope>GENOME REANNOTATION</scope>
    <source>
        <strain>Berkeley</strain>
    </source>
</reference>
<reference key="3">
    <citation type="journal article" date="2002" name="Genome Biol.">
        <title>A Drosophila full-length cDNA resource.</title>
        <authorList>
            <person name="Stapleton M."/>
            <person name="Carlson J.W."/>
            <person name="Brokstein P."/>
            <person name="Yu C."/>
            <person name="Champe M."/>
            <person name="George R.A."/>
            <person name="Guarin H."/>
            <person name="Kronmiller B."/>
            <person name="Pacleb J.M."/>
            <person name="Park S."/>
            <person name="Wan K.H."/>
            <person name="Rubin G.M."/>
            <person name="Celniker S.E."/>
        </authorList>
    </citation>
    <scope>NUCLEOTIDE SEQUENCE [LARGE SCALE MRNA]</scope>
    <source>
        <strain>Berkeley</strain>
        <tissue>Head</tissue>
    </source>
</reference>
<reference key="4">
    <citation type="journal article" date="1999" name="Mol. Gen. Genet.">
        <title>Identification of nuclear genes encoding mitochondrial proteins: isolation of a collection of D. melanogaster cDNAs homologous to sequences in the Human Gene Index database.</title>
        <authorList>
            <person name="Caggese C."/>
            <person name="Ragone G."/>
            <person name="Perrini B."/>
            <person name="Moschetti R."/>
            <person name="de Pinto V."/>
            <person name="Caizzi R."/>
            <person name="Barsanti P."/>
        </authorList>
    </citation>
    <scope>NUCLEOTIDE SEQUENCE [MRNA] OF 626-944</scope>
    <source>
        <tissue>Ovary</tissue>
    </source>
</reference>
<reference key="5">
    <citation type="journal article" date="2009" name="Science">
        <title>Genome-wide RNAi screen identifies Letm1 as a mitochondrial Ca2+/H+ antiporter.</title>
        <authorList>
            <person name="Jiang D."/>
            <person name="Zhao L."/>
            <person name="Clapham D.E."/>
        </authorList>
    </citation>
    <scope>FUNCTION</scope>
</reference>
<sequence length="1013" mass="113580">MNALLRHKGRNLRTSHLAQNVYKRFLKSNCCACSSVNVTDEPAKEDELPRRSASTSVLELSRSLGTYRRFQPHANYGYDYSGYGFRHLHTSRTLLETSSSKIDATVKKLKNQQKEKVEEIMKEVANGQAAAVRASSAATATASSEKGQNASATAGSTSATASTTSLAKTADKSVAKPKKPLRTRIWDELVHYYHGFRLLFIDVAICSKLLWRVLNGKTLTRRENKQLQRTTSDLFRLIPFSVFIIVPFMELLLPLFIKFFPGMLPSTFQTSTDRQEKLRQSLSVRLEVAKFLQQTLDQMPVQHKEHSSEEAKQFEAFFTKIRNPTEPVSNDEIIKFAKRFDDEITLDSLSREQLAALCRVLELNTIGTTTLLRFQLRLKLRSLATDDRVIAREGVDSLDLLELQQACKARGMRAYGLTEERLRFQLKEWIDLSLNEQVPPTLLLLSRTMLISDDSITTDKLKETIRVLPDAVGAHTRHAIGESEGKVDNKTKIEIIKEEERKIREEREEEREETIAKRSAIKEEIPAPYVFAEKLSGSQDLLDHKEQSSVSETDKGISSTDVQLLSEALKTLSSDKQLVVEKETIKELKEELADYKEDVEELREVRQVVKEPVRESRAAKLLYNRVNKMISQLDNVLNDLEARQHQIKQAESSDYAASSPTVEPQQMVHIDELVATIRRMKEASDEERFKVVGDLLVKLDADKDGVISVNEITKAVQSIDREATNIDKKQLEEFTELLSKLASRRRHEEIVHIDDLMNNIKVLKETSDEARLKHIEAVLEKFDADKDGVVTVNDIRKVLESIGRDNIKLSDKAIEELISLLDKEQVLQAEQKIEKAIAKSMKEAEKLKSEVDKADKDLSKLVNDIHDSAKEIQDIANEMRDKEETVPDKAKELKAEPAFKDTAKTLKDNAKDLDDLAKDPKSDPKSPTKASTGSGPAGLSGGGPSSGSSGIATGSTTESALREAAERQMEKILPSTDIGLPPTIQTPSQPPTSKKATATASTLSTTITAKKLL</sequence>
<accession>P91927</accession>
<accession>A4UZV1</accession>
<accession>Q0E8W7</accession>
<accession>Q9W160</accession>
<organism>
    <name type="scientific">Drosophila melanogaster</name>
    <name type="common">Fruit fly</name>
    <dbReference type="NCBI Taxonomy" id="7227"/>
    <lineage>
        <taxon>Eukaryota</taxon>
        <taxon>Metazoa</taxon>
        <taxon>Ecdysozoa</taxon>
        <taxon>Arthropoda</taxon>
        <taxon>Hexapoda</taxon>
        <taxon>Insecta</taxon>
        <taxon>Pterygota</taxon>
        <taxon>Neoptera</taxon>
        <taxon>Endopterygota</taxon>
        <taxon>Diptera</taxon>
        <taxon>Brachycera</taxon>
        <taxon>Muscomorpha</taxon>
        <taxon>Ephydroidea</taxon>
        <taxon>Drosophilidae</taxon>
        <taxon>Drosophila</taxon>
        <taxon>Sophophora</taxon>
    </lineage>
</organism>
<evidence type="ECO:0000250" key="1">
    <source>
        <dbReference type="UniProtKB" id="O95202"/>
    </source>
</evidence>
<evidence type="ECO:0000255" key="2"/>
<evidence type="ECO:0000255" key="3">
    <source>
        <dbReference type="PROSITE-ProRule" id="PRU00448"/>
    </source>
</evidence>
<evidence type="ECO:0000255" key="4">
    <source>
        <dbReference type="PROSITE-ProRule" id="PRU01094"/>
    </source>
</evidence>
<evidence type="ECO:0000256" key="5">
    <source>
        <dbReference type="SAM" id="MobiDB-lite"/>
    </source>
</evidence>
<evidence type="ECO:0000303" key="6">
    <source>
    </source>
</evidence>
<evidence type="ECO:0000305" key="7"/>
<evidence type="ECO:0000305" key="8">
    <source>
    </source>
</evidence>